<gene>
    <name evidence="1" type="primary">clpX</name>
    <name type="ordered locus">Clos_2173</name>
</gene>
<organism>
    <name type="scientific">Alkaliphilus oremlandii (strain OhILAs)</name>
    <name type="common">Clostridium oremlandii (strain OhILAs)</name>
    <dbReference type="NCBI Taxonomy" id="350688"/>
    <lineage>
        <taxon>Bacteria</taxon>
        <taxon>Bacillati</taxon>
        <taxon>Bacillota</taxon>
        <taxon>Clostridia</taxon>
        <taxon>Peptostreptococcales</taxon>
        <taxon>Natronincolaceae</taxon>
        <taxon>Alkaliphilus</taxon>
    </lineage>
</organism>
<proteinExistence type="inferred from homology"/>
<evidence type="ECO:0000255" key="1">
    <source>
        <dbReference type="HAMAP-Rule" id="MF_00175"/>
    </source>
</evidence>
<evidence type="ECO:0000255" key="2">
    <source>
        <dbReference type="PROSITE-ProRule" id="PRU01250"/>
    </source>
</evidence>
<reference key="1">
    <citation type="submission" date="2007-10" db="EMBL/GenBank/DDBJ databases">
        <title>Complete genome of Alkaliphilus oremlandii OhILAs.</title>
        <authorList>
            <person name="Copeland A."/>
            <person name="Lucas S."/>
            <person name="Lapidus A."/>
            <person name="Barry K."/>
            <person name="Detter J.C."/>
            <person name="Glavina del Rio T."/>
            <person name="Hammon N."/>
            <person name="Israni S."/>
            <person name="Dalin E."/>
            <person name="Tice H."/>
            <person name="Pitluck S."/>
            <person name="Chain P."/>
            <person name="Malfatti S."/>
            <person name="Shin M."/>
            <person name="Vergez L."/>
            <person name="Schmutz J."/>
            <person name="Larimer F."/>
            <person name="Land M."/>
            <person name="Hauser L."/>
            <person name="Kyrpides N."/>
            <person name="Mikhailova N."/>
            <person name="Stolz J.F."/>
            <person name="Dawson A."/>
            <person name="Fisher E."/>
            <person name="Crable B."/>
            <person name="Perera E."/>
            <person name="Lisak J."/>
            <person name="Ranganathan M."/>
            <person name="Basu P."/>
            <person name="Richardson P."/>
        </authorList>
    </citation>
    <scope>NUCLEOTIDE SEQUENCE [LARGE SCALE GENOMIC DNA]</scope>
    <source>
        <strain>OhILAs</strain>
    </source>
</reference>
<name>CLPX_ALKOO</name>
<protein>
    <recommendedName>
        <fullName evidence="1">ATP-dependent Clp protease ATP-binding subunit ClpX</fullName>
    </recommendedName>
</protein>
<keyword id="KW-0067">ATP-binding</keyword>
<keyword id="KW-0143">Chaperone</keyword>
<keyword id="KW-0479">Metal-binding</keyword>
<keyword id="KW-0547">Nucleotide-binding</keyword>
<keyword id="KW-1185">Reference proteome</keyword>
<keyword id="KW-0862">Zinc</keyword>
<comment type="function">
    <text evidence="1">ATP-dependent specificity component of the Clp protease. It directs the protease to specific substrates. Can perform chaperone functions in the absence of ClpP.</text>
</comment>
<comment type="subunit">
    <text evidence="1">Component of the ClpX-ClpP complex. Forms a hexameric ring that, in the presence of ATP, binds to fourteen ClpP subunits assembled into a disk-like structure with a central cavity, resembling the structure of eukaryotic proteasomes.</text>
</comment>
<comment type="similarity">
    <text evidence="1">Belongs to the ClpX chaperone family.</text>
</comment>
<feature type="chain" id="PRO_1000097921" description="ATP-dependent Clp protease ATP-binding subunit ClpX">
    <location>
        <begin position="1"/>
        <end position="426"/>
    </location>
</feature>
<feature type="domain" description="ClpX-type ZB" evidence="2">
    <location>
        <begin position="1"/>
        <end position="53"/>
    </location>
</feature>
<feature type="binding site" evidence="2">
    <location>
        <position position="12"/>
    </location>
    <ligand>
        <name>Zn(2+)</name>
        <dbReference type="ChEBI" id="CHEBI:29105"/>
    </ligand>
</feature>
<feature type="binding site" evidence="2">
    <location>
        <position position="15"/>
    </location>
    <ligand>
        <name>Zn(2+)</name>
        <dbReference type="ChEBI" id="CHEBI:29105"/>
    </ligand>
</feature>
<feature type="binding site" evidence="2">
    <location>
        <position position="34"/>
    </location>
    <ligand>
        <name>Zn(2+)</name>
        <dbReference type="ChEBI" id="CHEBI:29105"/>
    </ligand>
</feature>
<feature type="binding site" evidence="2">
    <location>
        <position position="37"/>
    </location>
    <ligand>
        <name>Zn(2+)</name>
        <dbReference type="ChEBI" id="CHEBI:29105"/>
    </ligand>
</feature>
<feature type="binding site" evidence="1">
    <location>
        <begin position="117"/>
        <end position="124"/>
    </location>
    <ligand>
        <name>ATP</name>
        <dbReference type="ChEBI" id="CHEBI:30616"/>
    </ligand>
</feature>
<accession>A8MIS7</accession>
<sequence>MSRFDEKKQLKCSFCGKSQDQVRRLIAGPNVYICDECIELCQEIIQEEFDESIDLDLMDLPKPSEIKDILDQYVIGQEKAKKALAVAVYNHYKRINVEDVKSGDVELQKSNILMLGPTGSGKTLLAQTLAKIINVPFAIADATSLTEAGYVGEDVENILLKLIQAADYDIERAEKGIIYIDEVDKIARKSENPSITRDVSGEGVQQALLKILEGTVASVPPQGGRKHPHQEFIQIDTTNILFIVGGAFDGIDSIIQKRTSKKSMGFGAEIESKQVLDLGSLLKQIQPEDLLKFGLIPEFVGRLPVVVTLEQLDEEALIKILTEPKNALTKQYKRLFEIDGVHLEIEEEALRLIAKKAIERKTGARGLRGIVEGIMMDTMYEIPSRDDIEKVIITAEAITENKEPKILLKEDVKPKLDKKENEESVS</sequence>
<dbReference type="EMBL" id="CP000853">
    <property type="protein sequence ID" value="ABW19709.1"/>
    <property type="molecule type" value="Genomic_DNA"/>
</dbReference>
<dbReference type="RefSeq" id="WP_012160018.1">
    <property type="nucleotide sequence ID" value="NC_009922.1"/>
</dbReference>
<dbReference type="SMR" id="A8MIS7"/>
<dbReference type="STRING" id="350688.Clos_2173"/>
<dbReference type="KEGG" id="aoe:Clos_2173"/>
<dbReference type="eggNOG" id="COG1219">
    <property type="taxonomic scope" value="Bacteria"/>
</dbReference>
<dbReference type="HOGENOM" id="CLU_014218_8_2_9"/>
<dbReference type="OrthoDB" id="9804062at2"/>
<dbReference type="Proteomes" id="UP000000269">
    <property type="component" value="Chromosome"/>
</dbReference>
<dbReference type="GO" id="GO:0009376">
    <property type="term" value="C:HslUV protease complex"/>
    <property type="evidence" value="ECO:0007669"/>
    <property type="project" value="TreeGrafter"/>
</dbReference>
<dbReference type="GO" id="GO:0005524">
    <property type="term" value="F:ATP binding"/>
    <property type="evidence" value="ECO:0007669"/>
    <property type="project" value="UniProtKB-UniRule"/>
</dbReference>
<dbReference type="GO" id="GO:0016887">
    <property type="term" value="F:ATP hydrolysis activity"/>
    <property type="evidence" value="ECO:0007669"/>
    <property type="project" value="InterPro"/>
</dbReference>
<dbReference type="GO" id="GO:0140662">
    <property type="term" value="F:ATP-dependent protein folding chaperone"/>
    <property type="evidence" value="ECO:0007669"/>
    <property type="project" value="InterPro"/>
</dbReference>
<dbReference type="GO" id="GO:0046983">
    <property type="term" value="F:protein dimerization activity"/>
    <property type="evidence" value="ECO:0007669"/>
    <property type="project" value="InterPro"/>
</dbReference>
<dbReference type="GO" id="GO:0051082">
    <property type="term" value="F:unfolded protein binding"/>
    <property type="evidence" value="ECO:0007669"/>
    <property type="project" value="UniProtKB-UniRule"/>
</dbReference>
<dbReference type="GO" id="GO:0008270">
    <property type="term" value="F:zinc ion binding"/>
    <property type="evidence" value="ECO:0007669"/>
    <property type="project" value="InterPro"/>
</dbReference>
<dbReference type="GO" id="GO:0051301">
    <property type="term" value="P:cell division"/>
    <property type="evidence" value="ECO:0007669"/>
    <property type="project" value="TreeGrafter"/>
</dbReference>
<dbReference type="GO" id="GO:0051603">
    <property type="term" value="P:proteolysis involved in protein catabolic process"/>
    <property type="evidence" value="ECO:0007669"/>
    <property type="project" value="TreeGrafter"/>
</dbReference>
<dbReference type="CDD" id="cd19497">
    <property type="entry name" value="RecA-like_ClpX"/>
    <property type="match status" value="1"/>
</dbReference>
<dbReference type="FunFam" id="1.10.8.60:FF:000002">
    <property type="entry name" value="ATP-dependent Clp protease ATP-binding subunit ClpX"/>
    <property type="match status" value="1"/>
</dbReference>
<dbReference type="FunFam" id="3.40.50.300:FF:000005">
    <property type="entry name" value="ATP-dependent Clp protease ATP-binding subunit ClpX"/>
    <property type="match status" value="1"/>
</dbReference>
<dbReference type="Gene3D" id="1.10.8.60">
    <property type="match status" value="1"/>
</dbReference>
<dbReference type="Gene3D" id="6.20.220.10">
    <property type="entry name" value="ClpX chaperone, C4-type zinc finger domain"/>
    <property type="match status" value="1"/>
</dbReference>
<dbReference type="Gene3D" id="3.40.50.300">
    <property type="entry name" value="P-loop containing nucleotide triphosphate hydrolases"/>
    <property type="match status" value="1"/>
</dbReference>
<dbReference type="HAMAP" id="MF_00175">
    <property type="entry name" value="ClpX"/>
    <property type="match status" value="1"/>
</dbReference>
<dbReference type="InterPro" id="IPR003593">
    <property type="entry name" value="AAA+_ATPase"/>
</dbReference>
<dbReference type="InterPro" id="IPR050052">
    <property type="entry name" value="ATP-dep_Clp_protease_ClpX"/>
</dbReference>
<dbReference type="InterPro" id="IPR003959">
    <property type="entry name" value="ATPase_AAA_core"/>
</dbReference>
<dbReference type="InterPro" id="IPR019489">
    <property type="entry name" value="Clp_ATPase_C"/>
</dbReference>
<dbReference type="InterPro" id="IPR004487">
    <property type="entry name" value="Clp_protease_ATP-bd_su_ClpX"/>
</dbReference>
<dbReference type="InterPro" id="IPR046425">
    <property type="entry name" value="ClpX_bact"/>
</dbReference>
<dbReference type="InterPro" id="IPR027417">
    <property type="entry name" value="P-loop_NTPase"/>
</dbReference>
<dbReference type="InterPro" id="IPR010603">
    <property type="entry name" value="Znf_CppX_C4"/>
</dbReference>
<dbReference type="InterPro" id="IPR038366">
    <property type="entry name" value="Znf_CppX_C4_sf"/>
</dbReference>
<dbReference type="NCBIfam" id="TIGR00382">
    <property type="entry name" value="clpX"/>
    <property type="match status" value="1"/>
</dbReference>
<dbReference type="NCBIfam" id="NF003745">
    <property type="entry name" value="PRK05342.1"/>
    <property type="match status" value="1"/>
</dbReference>
<dbReference type="PANTHER" id="PTHR48102:SF7">
    <property type="entry name" value="ATP-DEPENDENT CLP PROTEASE ATP-BINDING SUBUNIT CLPX-LIKE, MITOCHONDRIAL"/>
    <property type="match status" value="1"/>
</dbReference>
<dbReference type="PANTHER" id="PTHR48102">
    <property type="entry name" value="ATP-DEPENDENT CLP PROTEASE ATP-BINDING SUBUNIT CLPX-LIKE, MITOCHONDRIAL-RELATED"/>
    <property type="match status" value="1"/>
</dbReference>
<dbReference type="Pfam" id="PF07724">
    <property type="entry name" value="AAA_2"/>
    <property type="match status" value="1"/>
</dbReference>
<dbReference type="Pfam" id="PF10431">
    <property type="entry name" value="ClpB_D2-small"/>
    <property type="match status" value="1"/>
</dbReference>
<dbReference type="Pfam" id="PF06689">
    <property type="entry name" value="zf-C4_ClpX"/>
    <property type="match status" value="1"/>
</dbReference>
<dbReference type="SMART" id="SM00382">
    <property type="entry name" value="AAA"/>
    <property type="match status" value="1"/>
</dbReference>
<dbReference type="SMART" id="SM01086">
    <property type="entry name" value="ClpB_D2-small"/>
    <property type="match status" value="1"/>
</dbReference>
<dbReference type="SMART" id="SM00994">
    <property type="entry name" value="zf-C4_ClpX"/>
    <property type="match status" value="1"/>
</dbReference>
<dbReference type="SUPFAM" id="SSF57716">
    <property type="entry name" value="Glucocorticoid receptor-like (DNA-binding domain)"/>
    <property type="match status" value="1"/>
</dbReference>
<dbReference type="SUPFAM" id="SSF52540">
    <property type="entry name" value="P-loop containing nucleoside triphosphate hydrolases"/>
    <property type="match status" value="1"/>
</dbReference>
<dbReference type="PROSITE" id="PS51902">
    <property type="entry name" value="CLPX_ZB"/>
    <property type="match status" value="1"/>
</dbReference>